<reference key="1">
    <citation type="journal article" date="2007" name="Proc. Natl. Acad. Sci. U.S.A.">
        <title>Modulation of LMP1 protein expression by EBV-encoded microRNAs.</title>
        <authorList>
            <person name="Lo A.K."/>
            <person name="To K.F."/>
            <person name="Lo K.W."/>
            <person name="Lung R.W."/>
            <person name="Hui J.W."/>
            <person name="Liao G."/>
            <person name="Hayward S.D."/>
        </authorList>
    </citation>
    <scope>NUCLEOTIDE SEQUENCE [GENOMIC DNA]</scope>
    <source>
        <strain>2117</strain>
        <strain>C666-1</strain>
    </source>
</reference>
<reference key="2">
    <citation type="submission" date="2006-11" db="EMBL/GenBank/DDBJ databases">
        <title>Modulation of latent membrane protein 1 expression in nasopharyngeal carcinoma cells by Epstein-Barr virus encoded miRNAs.</title>
        <authorList>
            <person name="Lo A.K.F."/>
            <person name="Lo K.W."/>
            <person name="To K.F."/>
            <person name="Lung R.W.M."/>
            <person name="Hui J.W.Y."/>
            <person name="Hayward S.D."/>
        </authorList>
    </citation>
    <scope>NUCLEOTIDE SEQUENCE [GENOMIC DNA]</scope>
    <source>
        <strain>Akata</strain>
        <strain>NPC-21</strain>
        <strain>NPC-56</strain>
        <strain>NPC-57</strain>
    </source>
</reference>
<reference key="3">
    <citation type="journal article" date="1984" name="Nature">
        <title>DNA sequence and expression of the B95-8 Epstein-Barr virus genome.</title>
        <authorList>
            <person name="Baer R."/>
            <person name="Bankier A.T."/>
            <person name="Biggin M.D."/>
            <person name="Deininger P.L."/>
            <person name="Farrell P.J."/>
            <person name="Gibson T.J."/>
            <person name="Hatfull G."/>
            <person name="Hudson G.S."/>
            <person name="Satchwell S.C."/>
            <person name="Seguin C."/>
            <person name="Tuffnell P.S."/>
            <person name="Barrell B.G."/>
        </authorList>
    </citation>
    <scope>NUCLEOTIDE SEQUENCE [LARGE SCALE GENOMIC DNA]</scope>
    <source>
        <strain>B95-8</strain>
    </source>
</reference>
<reference key="4">
    <citation type="journal article" date="2003" name="Virology">
        <title>Updated Epstein-Barr virus (EBV) DNA sequence and analysis of a promoter for the BART (CST, BARF0) RNAs of EBV.</title>
        <authorList>
            <person name="de Jesus O."/>
            <person name="Smith P.R."/>
            <person name="Spender L.C."/>
            <person name="Elgueta Karstegl C."/>
            <person name="Niller H.H."/>
            <person name="Huang D."/>
            <person name="Farrell P.J."/>
        </authorList>
    </citation>
    <scope>GENOME REANNOTATION</scope>
</reference>
<reference key="5">
    <citation type="journal article" date="2009" name="J. Immunol.">
        <title>Specific targeting of the EBV lytic phase protein BNLF2a to the transporter associated with antigen processing results in impairment of HLA class I-restricted antigen presentation.</title>
        <authorList>
            <person name="Horst D."/>
            <person name="van Leeuwen D."/>
            <person name="Croft N.P."/>
            <person name="Garstka M.A."/>
            <person name="Hislop A.D."/>
            <person name="Kremmer E."/>
            <person name="Rickinson A.B."/>
            <person name="Wiertz E.J.H.J."/>
            <person name="Ressing M.E."/>
        </authorList>
    </citation>
    <scope>FUNCTION</scope>
    <scope>INTERACTION WITH HOST TAP1 AND TAP2</scope>
</reference>
<sequence>MVHVLERALLEQQSSACGLPGSSTETRPSHPCPEDPDVSRLRLLLVVLCVLFGLLCLLLI</sequence>
<proteinExistence type="evidence at protein level"/>
<gene>
    <name type="ORF">BNLF2a</name>
</gene>
<organism>
    <name type="scientific">Epstein-Barr virus (strain B95-8)</name>
    <name type="common">HHV-4</name>
    <name type="synonym">Human herpesvirus 4</name>
    <dbReference type="NCBI Taxonomy" id="10377"/>
    <lineage>
        <taxon>Viruses</taxon>
        <taxon>Duplodnaviria</taxon>
        <taxon>Heunggongvirae</taxon>
        <taxon>Peploviricota</taxon>
        <taxon>Herviviricetes</taxon>
        <taxon>Herpesvirales</taxon>
        <taxon>Orthoherpesviridae</taxon>
        <taxon>Gammaherpesvirinae</taxon>
        <taxon>Lymphocryptovirus</taxon>
        <taxon>Lymphocryptovirus humangamma4</taxon>
        <taxon>Epstein-Barr virus (strain GD1)</taxon>
    </lineage>
</organism>
<accession>P0C739</accession>
<accession>Q04361</accession>
<accession>Q8AZJ2</accession>
<protein>
    <recommendedName>
        <fullName>Protein BNLF2a</fullName>
    </recommendedName>
</protein>
<evidence type="ECO:0000255" key="1"/>
<evidence type="ECO:0000256" key="2">
    <source>
        <dbReference type="SAM" id="MobiDB-lite"/>
    </source>
</evidence>
<evidence type="ECO:0000269" key="3">
    <source>
    </source>
</evidence>
<evidence type="ECO:0000305" key="4"/>
<feature type="chain" id="PRO_0000382427" description="Protein BNLF2a">
    <location>
        <begin position="1"/>
        <end position="60"/>
    </location>
</feature>
<feature type="transmembrane region" description="Helical" evidence="1">
    <location>
        <begin position="41"/>
        <end position="59"/>
    </location>
</feature>
<feature type="region of interest" description="Disordered" evidence="2">
    <location>
        <begin position="14"/>
        <end position="34"/>
    </location>
</feature>
<feature type="compositionally biased region" description="Polar residues" evidence="2">
    <location>
        <begin position="14"/>
        <end position="26"/>
    </location>
</feature>
<comment type="function">
    <text evidence="3">Participates in viral evasion from HLA class I-restricted T-cell immunity. Associates with host TAP1 and TAP2 and prevents TAP-mediated peptide transport and subsequent loading.</text>
</comment>
<comment type="subunit">
    <text evidence="3">Interacts with host TAP1 and TAP2.</text>
</comment>
<comment type="interaction">
    <interactant intactId="EBI-9346744">
        <id>P0C739</id>
    </interactant>
    <interactant intactId="EBI-747259">
        <id>Q03518</id>
        <label>TAP1</label>
    </interactant>
    <organismsDiffer>true</organismsDiffer>
    <experiments>9</experiments>
</comment>
<comment type="interaction">
    <interactant intactId="EBI-9346744">
        <id>P0C739</id>
    </interactant>
    <interactant intactId="EBI-780781">
        <id>Q03519</id>
        <label>TAP2</label>
    </interactant>
    <organismsDiffer>true</organismsDiffer>
    <experiments>6</experiments>
</comment>
<comment type="interaction">
    <interactant intactId="EBI-9346744">
        <id>P0C739</id>
    </interactant>
    <interactant intactId="EBI-874801">
        <id>O15533</id>
        <label>TAPBP</label>
    </interactant>
    <organismsDiffer>true</organismsDiffer>
    <experiments>6</experiments>
</comment>
<comment type="subcellular location">
    <subcellularLocation>
        <location evidence="4">Host endoplasmic reticulum membrane</location>
        <topology evidence="4">Single-pass membrane protein</topology>
    </subcellularLocation>
</comment>
<comment type="similarity">
    <text evidence="4">Belongs to the lymphocryptovirus BNLF2a family.</text>
</comment>
<organismHost>
    <name type="scientific">Homo sapiens</name>
    <name type="common">Human</name>
    <dbReference type="NCBI Taxonomy" id="9606"/>
</organismHost>
<name>BNL2A_EBVB9</name>
<keyword id="KW-1038">Host endoplasmic reticulum</keyword>
<keyword id="KW-1043">Host membrane</keyword>
<keyword id="KW-0945">Host-virus interaction</keyword>
<keyword id="KW-1080">Inhibition of host adaptive immune response by virus</keyword>
<keyword id="KW-1107">Inhibition of host TAP by virus</keyword>
<keyword id="KW-0472">Membrane</keyword>
<keyword id="KW-1185">Reference proteome</keyword>
<keyword id="KW-0812">Transmembrane</keyword>
<keyword id="KW-1133">Transmembrane helix</keyword>
<keyword id="KW-0899">Viral immunoevasion</keyword>
<dbReference type="EMBL" id="V01555">
    <property type="protein sequence ID" value="CAA24812.1"/>
    <property type="molecule type" value="Genomic_DNA"/>
</dbReference>
<dbReference type="EMBL" id="X01995">
    <property type="protein sequence ID" value="CAA26024.1"/>
    <property type="molecule type" value="Genomic_DNA"/>
</dbReference>
<dbReference type="EMBL" id="EF103557">
    <property type="protein sequence ID" value="ABO28739.1"/>
    <property type="molecule type" value="Genomic_DNA"/>
</dbReference>
<dbReference type="EMBL" id="EF103558">
    <property type="protein sequence ID" value="ABO28741.1"/>
    <property type="molecule type" value="Genomic_DNA"/>
</dbReference>
<dbReference type="EMBL" id="EF110909">
    <property type="protein sequence ID" value="ABO28743.1"/>
    <property type="molecule type" value="Genomic_DNA"/>
</dbReference>
<dbReference type="EMBL" id="EF110910">
    <property type="protein sequence ID" value="ABO28745.1"/>
    <property type="molecule type" value="Genomic_DNA"/>
</dbReference>
<dbReference type="EMBL" id="EF110911">
    <property type="protein sequence ID" value="ABO28747.1"/>
    <property type="molecule type" value="Genomic_DNA"/>
</dbReference>
<dbReference type="EMBL" id="EF110912">
    <property type="protein sequence ID" value="ABO28749.1"/>
    <property type="molecule type" value="Genomic_DNA"/>
</dbReference>
<dbReference type="EMBL" id="AJ507799">
    <property type="protein sequence ID" value="CAD53471.1"/>
    <property type="molecule type" value="Genomic_DNA"/>
</dbReference>
<dbReference type="RefSeq" id="YP_401721.1">
    <property type="nucleotide sequence ID" value="NC_007605.1"/>
</dbReference>
<dbReference type="SMR" id="P0C739"/>
<dbReference type="IntAct" id="P0C739">
    <property type="interactions" value="252"/>
</dbReference>
<dbReference type="MINT" id="P0C739"/>
<dbReference type="DNASU" id="3783720"/>
<dbReference type="GeneID" id="3783720"/>
<dbReference type="KEGG" id="vg:3783720"/>
<dbReference type="Proteomes" id="UP000153037">
    <property type="component" value="Segment"/>
</dbReference>
<dbReference type="GO" id="GO:0005789">
    <property type="term" value="C:endoplasmic reticulum membrane"/>
    <property type="evidence" value="ECO:0000314"/>
    <property type="project" value="UniProt"/>
</dbReference>
<dbReference type="GO" id="GO:0044167">
    <property type="term" value="C:host cell endoplasmic reticulum membrane"/>
    <property type="evidence" value="ECO:0007669"/>
    <property type="project" value="UniProtKB-SubCell"/>
</dbReference>
<dbReference type="GO" id="GO:0140311">
    <property type="term" value="F:protein sequestering activity"/>
    <property type="evidence" value="ECO:0000314"/>
    <property type="project" value="UniProt"/>
</dbReference>
<dbReference type="GO" id="GO:0019885">
    <property type="term" value="P:antigen processing and presentation of endogenous peptide antigen via MHC class I"/>
    <property type="evidence" value="ECO:0000314"/>
    <property type="project" value="UniProt"/>
</dbReference>
<dbReference type="GO" id="GO:0039588">
    <property type="term" value="P:symbiont-mediated suppression of host antigen processing and presentation"/>
    <property type="evidence" value="ECO:0007669"/>
    <property type="project" value="UniProtKB-KW"/>
</dbReference>